<comment type="function">
    <text evidence="2">Aquaporins form homotetrameric transmembrane channels, with each monomer independently mediating water transport across the plasma membrane along its osmotic gradient. Specifically expressed in lens fiber cells, this aquaporin is crucial for maintaining lens water homeostasis and transparency. Beyond water permeability, it also acts as a cell-to-cell adhesion molecule, forming thin junctions between lens fiber cells that are essential for maintaining the ordered structure and transparency of the lens.</text>
</comment>
<comment type="catalytic activity">
    <reaction evidence="2">
        <text>H2O(in) = H2O(out)</text>
        <dbReference type="Rhea" id="RHEA:29667"/>
        <dbReference type="ChEBI" id="CHEBI:15377"/>
    </reaction>
</comment>
<comment type="activity regulation">
    <text evidence="2">The water channel activity is inhibited by calcium through calmodulin/CALM.</text>
</comment>
<comment type="subunit">
    <text evidence="1 2">Homotetramer; each monomer provides an independent water pore. Two homotetramers on opposing membranes can dimerize, forming a cell-cell junction. Interacts with CALM; the calcium-calmodulin/CALM complex interacts with the cytoplasmic domains of two aquaporins, leading to channel closure (By similarity). Interacts with BFSP1 (via C-terminus); prevents calcium-dependent inhibition of the water channel activity (By similarity).</text>
</comment>
<comment type="subcellular location">
    <subcellularLocation>
        <location evidence="2">Cell membrane</location>
        <topology evidence="3">Multi-pass membrane protein</topology>
    </subcellularLocation>
    <subcellularLocation>
        <location evidence="3">Cell junction</location>
    </subcellularLocation>
    <text evidence="3">Localizes to thin cell-cell junctions in lens fiber cells.</text>
</comment>
<comment type="tissue specificity">
    <text evidence="5">Detected in eye lens (at protein level).</text>
</comment>
<comment type="domain">
    <text evidence="3">Aquaporins contain two tandem repeats each containing three membrane-spanning domains and a pore-forming loop with the signature motif Asn-Pro-Ala (NPA).</text>
</comment>
<comment type="PTM">
    <text evidence="3">Subject to partial proteolytic cleavage in the eye lens core. Partial proteolysis promotes interactions between tetramers from adjoining membranes.</text>
</comment>
<comment type="PTM">
    <text evidence="2">Fatty acylated at Met-1 and Lys-238. The acyl modifications, in decreasing order of ion abundance, are: oleoyl (C18:1) &gt; palmitoyl (C16:0) &gt; stearoyl (C18:0) &gt; eicosenoyl (C20:1) &gt; dihomo-gamma-linolenoyl (C20:3) &gt; palmitoleoyl (C16:1) &gt; eicosadienoyl (C20:2).</text>
</comment>
<comment type="similarity">
    <text evidence="7">Belongs to the MIP/aquaporin (TC 1.A.8) family.</text>
</comment>
<organism>
    <name type="scientific">Cavia porcellus</name>
    <name type="common">Guinea pig</name>
    <dbReference type="NCBI Taxonomy" id="10141"/>
    <lineage>
        <taxon>Eukaryota</taxon>
        <taxon>Metazoa</taxon>
        <taxon>Chordata</taxon>
        <taxon>Craniata</taxon>
        <taxon>Vertebrata</taxon>
        <taxon>Euteleostomi</taxon>
        <taxon>Mammalia</taxon>
        <taxon>Eutheria</taxon>
        <taxon>Euarchontoglires</taxon>
        <taxon>Glires</taxon>
        <taxon>Rodentia</taxon>
        <taxon>Hystricomorpha</taxon>
        <taxon>Caviidae</taxon>
        <taxon>Cavia</taxon>
    </lineage>
</organism>
<reference key="1">
    <citation type="journal article" date="2004" name="Mol. Vis.">
        <title>Sequence and peptide map of guinea pig aquaporin 0.</title>
        <authorList>
            <person name="Han J."/>
            <person name="Little M."/>
            <person name="David L.L."/>
            <person name="Giblin F.J."/>
            <person name="Schey K.L."/>
        </authorList>
    </citation>
    <scope>NUCLEOTIDE SEQUENCE [MRNA]</scope>
    <scope>IDENTIFICATION BY MASS SPECTROMETRY</scope>
    <scope>PHOSPHORYLATION AT SER-235</scope>
    <scope>TISSUE SPECIFICITY</scope>
    <scope>DEAMIDATION AT ASN-245 AND ASN-246</scope>
</reference>
<feature type="chain" id="PRO_0000063911" description="Lens fiber major intrinsic protein">
    <location>
        <begin position="1"/>
        <end position="263"/>
    </location>
</feature>
<feature type="topological domain" description="Cytoplasmic" evidence="1">
    <location>
        <begin position="1"/>
        <end position="9"/>
    </location>
</feature>
<feature type="transmembrane region" description="Helical; Name=1" evidence="1">
    <location>
        <begin position="10"/>
        <end position="29"/>
    </location>
</feature>
<feature type="topological domain" description="Extracellular" evidence="1">
    <location>
        <begin position="30"/>
        <end position="41"/>
    </location>
</feature>
<feature type="transmembrane region" description="Helical; Name=2" evidence="1">
    <location>
        <begin position="42"/>
        <end position="59"/>
    </location>
</feature>
<feature type="topological domain" description="Cytoplasmic" evidence="1">
    <location>
        <begin position="60"/>
        <end position="61"/>
    </location>
</feature>
<feature type="intramembrane region" description="Discontinuously helical" evidence="1">
    <location>
        <begin position="62"/>
        <end position="77"/>
    </location>
</feature>
<feature type="topological domain" description="Cytoplasmic" evidence="1">
    <location>
        <begin position="78"/>
        <end position="82"/>
    </location>
</feature>
<feature type="transmembrane region" description="Helical; Name=3" evidence="1">
    <location>
        <begin position="83"/>
        <end position="106"/>
    </location>
</feature>
<feature type="topological domain" description="Extracellular" evidence="1">
    <location>
        <begin position="107"/>
        <end position="127"/>
    </location>
</feature>
<feature type="transmembrane region" description="Helical; Name=4" evidence="1">
    <location>
        <begin position="128"/>
        <end position="148"/>
    </location>
</feature>
<feature type="topological domain" description="Cytoplasmic" evidence="1">
    <location>
        <begin position="149"/>
        <end position="156"/>
    </location>
</feature>
<feature type="transmembrane region" description="Helical; Name=5" evidence="1">
    <location>
        <begin position="157"/>
        <end position="175"/>
    </location>
</feature>
<feature type="topological domain" description="Extracellular" evidence="1">
    <location>
        <begin position="176"/>
        <end position="178"/>
    </location>
</feature>
<feature type="intramembrane region" description="Discontinuously helical" evidence="1">
    <location>
        <begin position="179"/>
        <end position="193"/>
    </location>
</feature>
<feature type="topological domain" description="Extracellular" evidence="1">
    <location>
        <begin position="194"/>
        <end position="200"/>
    </location>
</feature>
<feature type="transmembrane region" description="Helical; Name=6" evidence="1">
    <location>
        <begin position="201"/>
        <end position="222"/>
    </location>
</feature>
<feature type="topological domain" description="Cytoplasmic" evidence="1">
    <location>
        <begin position="223"/>
        <end position="263"/>
    </location>
</feature>
<feature type="region of interest" description="Interaction with CALM" evidence="1">
    <location>
        <begin position="227"/>
        <end position="237"/>
    </location>
</feature>
<feature type="region of interest" description="Disordered" evidence="4">
    <location>
        <begin position="238"/>
        <end position="263"/>
    </location>
</feature>
<feature type="short sequence motif" description="NPA 1" evidence="1">
    <location>
        <begin position="68"/>
        <end position="70"/>
    </location>
</feature>
<feature type="short sequence motif" description="NPA 2" evidence="1">
    <location>
        <begin position="184"/>
        <end position="186"/>
    </location>
</feature>
<feature type="site" description="Important for water channel gating" evidence="1">
    <location>
        <position position="149"/>
    </location>
</feature>
<feature type="site" description="Interaction with BFSP1" evidence="1">
    <location>
        <position position="246"/>
    </location>
</feature>
<feature type="site" description="interaction with BFSP1" evidence="1">
    <location>
        <position position="250"/>
    </location>
</feature>
<feature type="modified residue" description="Phosphoserine" evidence="5">
    <location>
        <position position="235"/>
    </location>
</feature>
<feature type="modified residue" description="Phosphoserine" evidence="1">
    <location>
        <position position="243"/>
    </location>
</feature>
<feature type="modified residue" description="Deamidated asparagine; by deterioration" evidence="5">
    <location>
        <position position="245"/>
    </location>
</feature>
<feature type="modified residue" description="Deamidated asparagine; by deterioration" evidence="5">
    <location>
        <position position="246"/>
    </location>
</feature>
<gene>
    <name evidence="2" type="primary">MIP</name>
    <name evidence="6" type="synonym">AQP0</name>
</gene>
<protein>
    <recommendedName>
        <fullName evidence="2">Lens fiber major intrinsic protein</fullName>
    </recommendedName>
    <alternativeName>
        <fullName evidence="8">Aquaporin-0</fullName>
    </alternativeName>
</protein>
<keyword id="KW-0965">Cell junction</keyword>
<keyword id="KW-1003">Cell membrane</keyword>
<keyword id="KW-0273">Eye lens protein</keyword>
<keyword id="KW-0449">Lipoprotein</keyword>
<keyword id="KW-0472">Membrane</keyword>
<keyword id="KW-0597">Phosphoprotein</keyword>
<keyword id="KW-1185">Reference proteome</keyword>
<keyword id="KW-0677">Repeat</keyword>
<keyword id="KW-0716">Sensory transduction</keyword>
<keyword id="KW-0812">Transmembrane</keyword>
<keyword id="KW-1133">Transmembrane helix</keyword>
<keyword id="KW-0813">Transport</keyword>
<accession>Q6RZ07</accession>
<evidence type="ECO:0000250" key="1">
    <source>
        <dbReference type="UniProtKB" id="P06624"/>
    </source>
</evidence>
<evidence type="ECO:0000250" key="2">
    <source>
        <dbReference type="UniProtKB" id="P30301"/>
    </source>
</evidence>
<evidence type="ECO:0000250" key="3">
    <source>
        <dbReference type="UniProtKB" id="Q6J8I9"/>
    </source>
</evidence>
<evidence type="ECO:0000256" key="4">
    <source>
        <dbReference type="SAM" id="MobiDB-lite"/>
    </source>
</evidence>
<evidence type="ECO:0000269" key="5">
    <source>
    </source>
</evidence>
<evidence type="ECO:0000303" key="6">
    <source>
    </source>
</evidence>
<evidence type="ECO:0000305" key="7"/>
<evidence type="ECO:0000305" key="8">
    <source>
    </source>
</evidence>
<sequence length="263" mass="28369">MWELRSASFWRAIFAEFFATLFYVFFGLGASLRWAPGPLHVLQVALAFGLALAXLVQTVGHISGAHVNPAVTFXFLVGSQMSLLRAFCYMAAQLLGAVAGAAVLYSVTPPAVRGNLALNTLHAGVSVXQATTVEIFLTLQFVLCIFATYDERRNGRLGSVALAVGFSLTLGHLFGMYYTGAGMNPARSFAPAILTRNFTNHWVYWVGPIIGGGLGSLLYDFLLFPRLKSVSERLSILKGTRPSDNNGQPEGTGEPVELKTQAL</sequence>
<proteinExistence type="evidence at protein level"/>
<name>MIP_CAVPO</name>
<dbReference type="EMBL" id="AY485151">
    <property type="protein sequence ID" value="AAR37021.1"/>
    <property type="molecule type" value="mRNA"/>
</dbReference>
<dbReference type="FunCoup" id="Q6RZ07">
    <property type="interactions" value="297"/>
</dbReference>
<dbReference type="STRING" id="10141.ENSCPOP00000002132"/>
<dbReference type="iPTMnet" id="Q6RZ07"/>
<dbReference type="eggNOG" id="KOG0223">
    <property type="taxonomic scope" value="Eukaryota"/>
</dbReference>
<dbReference type="InParanoid" id="Q6RZ07"/>
<dbReference type="Proteomes" id="UP000005447">
    <property type="component" value="Unassembled WGS sequence"/>
</dbReference>
<dbReference type="GO" id="GO:0070161">
    <property type="term" value="C:anchoring junction"/>
    <property type="evidence" value="ECO:0007669"/>
    <property type="project" value="UniProtKB-SubCell"/>
</dbReference>
<dbReference type="GO" id="GO:0016324">
    <property type="term" value="C:apical plasma membrane"/>
    <property type="evidence" value="ECO:0007669"/>
    <property type="project" value="TreeGrafter"/>
</dbReference>
<dbReference type="GO" id="GO:0005886">
    <property type="term" value="C:plasma membrane"/>
    <property type="evidence" value="ECO:0000250"/>
    <property type="project" value="UniProtKB"/>
</dbReference>
<dbReference type="GO" id="GO:0005516">
    <property type="term" value="F:calmodulin binding"/>
    <property type="evidence" value="ECO:0000250"/>
    <property type="project" value="UniProtKB"/>
</dbReference>
<dbReference type="GO" id="GO:0098631">
    <property type="term" value="F:cell adhesion mediator activity"/>
    <property type="evidence" value="ECO:0000250"/>
    <property type="project" value="UniProtKB"/>
</dbReference>
<dbReference type="GO" id="GO:0005212">
    <property type="term" value="F:structural constituent of eye lens"/>
    <property type="evidence" value="ECO:0007669"/>
    <property type="project" value="UniProtKB-KW"/>
</dbReference>
<dbReference type="GO" id="GO:0015250">
    <property type="term" value="F:water channel activity"/>
    <property type="evidence" value="ECO:0000250"/>
    <property type="project" value="UniProtKB"/>
</dbReference>
<dbReference type="GO" id="GO:0034109">
    <property type="term" value="P:homotypic cell-cell adhesion"/>
    <property type="evidence" value="ECO:0000250"/>
    <property type="project" value="UniProtKB"/>
</dbReference>
<dbReference type="GO" id="GO:0036438">
    <property type="term" value="P:maintenance of lens transparency"/>
    <property type="evidence" value="ECO:0000250"/>
    <property type="project" value="UniProtKB"/>
</dbReference>
<dbReference type="GO" id="GO:0006833">
    <property type="term" value="P:water transport"/>
    <property type="evidence" value="ECO:0000250"/>
    <property type="project" value="UniProtKB"/>
</dbReference>
<dbReference type="CDD" id="cd00333">
    <property type="entry name" value="MIP"/>
    <property type="match status" value="1"/>
</dbReference>
<dbReference type="FunFam" id="1.20.1080.10:FF:000003">
    <property type="entry name" value="Lens fiber major intrinsic"/>
    <property type="match status" value="1"/>
</dbReference>
<dbReference type="Gene3D" id="1.20.1080.10">
    <property type="entry name" value="Glycerol uptake facilitator protein"/>
    <property type="match status" value="1"/>
</dbReference>
<dbReference type="InterPro" id="IPR023271">
    <property type="entry name" value="Aquaporin-like"/>
</dbReference>
<dbReference type="InterPro" id="IPR034294">
    <property type="entry name" value="Aquaporin_transptr"/>
</dbReference>
<dbReference type="InterPro" id="IPR000425">
    <property type="entry name" value="MIP"/>
</dbReference>
<dbReference type="NCBIfam" id="TIGR00861">
    <property type="entry name" value="MIP"/>
    <property type="match status" value="1"/>
</dbReference>
<dbReference type="PANTHER" id="PTHR19139">
    <property type="entry name" value="AQUAPORIN TRANSPORTER"/>
    <property type="match status" value="1"/>
</dbReference>
<dbReference type="PANTHER" id="PTHR19139:SF39">
    <property type="entry name" value="LENS FIBER MAJOR INTRINSIC PROTEIN"/>
    <property type="match status" value="1"/>
</dbReference>
<dbReference type="Pfam" id="PF00230">
    <property type="entry name" value="MIP"/>
    <property type="match status" value="1"/>
</dbReference>
<dbReference type="PRINTS" id="PR02014">
    <property type="entry name" value="AQUAPORIN2"/>
</dbReference>
<dbReference type="PRINTS" id="PR00783">
    <property type="entry name" value="MINTRINSICP"/>
</dbReference>
<dbReference type="SUPFAM" id="SSF81338">
    <property type="entry name" value="Aquaporin-like"/>
    <property type="match status" value="1"/>
</dbReference>
<dbReference type="PROSITE" id="PS00221">
    <property type="entry name" value="MIP"/>
    <property type="match status" value="1"/>
</dbReference>